<keyword id="KW-0067">ATP-binding</keyword>
<keyword id="KW-0133">Cell shape</keyword>
<keyword id="KW-0961">Cell wall biogenesis/degradation</keyword>
<keyword id="KW-0963">Cytoplasm</keyword>
<keyword id="KW-0436">Ligase</keyword>
<keyword id="KW-0460">Magnesium</keyword>
<keyword id="KW-0464">Manganese</keyword>
<keyword id="KW-0479">Metal-binding</keyword>
<keyword id="KW-0547">Nucleotide-binding</keyword>
<keyword id="KW-0573">Peptidoglycan synthesis</keyword>
<accession>B4S8W3</accession>
<organism>
    <name type="scientific">Prosthecochloris aestuarii (strain DSM 271 / SK 413)</name>
    <dbReference type="NCBI Taxonomy" id="290512"/>
    <lineage>
        <taxon>Bacteria</taxon>
        <taxon>Pseudomonadati</taxon>
        <taxon>Chlorobiota</taxon>
        <taxon>Chlorobiia</taxon>
        <taxon>Chlorobiales</taxon>
        <taxon>Chlorobiaceae</taxon>
        <taxon>Prosthecochloris</taxon>
    </lineage>
</organism>
<evidence type="ECO:0000250" key="1"/>
<evidence type="ECO:0000255" key="2">
    <source>
        <dbReference type="HAMAP-Rule" id="MF_00047"/>
    </source>
</evidence>
<gene>
    <name evidence="2" type="primary">ddl</name>
    <name type="ordered locus">Paes_1480</name>
</gene>
<proteinExistence type="inferred from homology"/>
<feature type="chain" id="PRO_1000091203" description="D-alanine--D-alanine ligase">
    <location>
        <begin position="1"/>
        <end position="360"/>
    </location>
</feature>
<feature type="domain" description="ATP-grasp" evidence="2">
    <location>
        <begin position="146"/>
        <end position="352"/>
    </location>
</feature>
<feature type="binding site" evidence="2">
    <location>
        <begin position="179"/>
        <end position="234"/>
    </location>
    <ligand>
        <name>ATP</name>
        <dbReference type="ChEBI" id="CHEBI:30616"/>
    </ligand>
</feature>
<feature type="binding site" evidence="2">
    <location>
        <position position="305"/>
    </location>
    <ligand>
        <name>Mg(2+)</name>
        <dbReference type="ChEBI" id="CHEBI:18420"/>
        <label>1</label>
    </ligand>
</feature>
<feature type="binding site" evidence="2">
    <location>
        <position position="319"/>
    </location>
    <ligand>
        <name>Mg(2+)</name>
        <dbReference type="ChEBI" id="CHEBI:18420"/>
        <label>1</label>
    </ligand>
</feature>
<feature type="binding site" evidence="2">
    <location>
        <position position="319"/>
    </location>
    <ligand>
        <name>Mg(2+)</name>
        <dbReference type="ChEBI" id="CHEBI:18420"/>
        <label>2</label>
    </ligand>
</feature>
<feature type="binding site" evidence="2">
    <location>
        <position position="321"/>
    </location>
    <ligand>
        <name>Mg(2+)</name>
        <dbReference type="ChEBI" id="CHEBI:18420"/>
        <label>2</label>
    </ligand>
</feature>
<dbReference type="EC" id="6.3.2.4" evidence="2"/>
<dbReference type="EMBL" id="CP001108">
    <property type="protein sequence ID" value="ACF46500.1"/>
    <property type="molecule type" value="Genomic_DNA"/>
</dbReference>
<dbReference type="RefSeq" id="WP_012506033.1">
    <property type="nucleotide sequence ID" value="NC_011059.1"/>
</dbReference>
<dbReference type="SMR" id="B4S8W3"/>
<dbReference type="STRING" id="290512.Paes_1480"/>
<dbReference type="KEGG" id="paa:Paes_1480"/>
<dbReference type="eggNOG" id="COG1181">
    <property type="taxonomic scope" value="Bacteria"/>
</dbReference>
<dbReference type="HOGENOM" id="CLU_039268_0_0_10"/>
<dbReference type="UniPathway" id="UPA00219"/>
<dbReference type="Proteomes" id="UP000002725">
    <property type="component" value="Chromosome"/>
</dbReference>
<dbReference type="GO" id="GO:0005829">
    <property type="term" value="C:cytosol"/>
    <property type="evidence" value="ECO:0007669"/>
    <property type="project" value="TreeGrafter"/>
</dbReference>
<dbReference type="GO" id="GO:0005524">
    <property type="term" value="F:ATP binding"/>
    <property type="evidence" value="ECO:0007669"/>
    <property type="project" value="UniProtKB-KW"/>
</dbReference>
<dbReference type="GO" id="GO:0008716">
    <property type="term" value="F:D-alanine-D-alanine ligase activity"/>
    <property type="evidence" value="ECO:0007669"/>
    <property type="project" value="UniProtKB-UniRule"/>
</dbReference>
<dbReference type="GO" id="GO:0046872">
    <property type="term" value="F:metal ion binding"/>
    <property type="evidence" value="ECO:0007669"/>
    <property type="project" value="UniProtKB-KW"/>
</dbReference>
<dbReference type="GO" id="GO:0071555">
    <property type="term" value="P:cell wall organization"/>
    <property type="evidence" value="ECO:0007669"/>
    <property type="project" value="UniProtKB-KW"/>
</dbReference>
<dbReference type="GO" id="GO:0009252">
    <property type="term" value="P:peptidoglycan biosynthetic process"/>
    <property type="evidence" value="ECO:0007669"/>
    <property type="project" value="UniProtKB-UniRule"/>
</dbReference>
<dbReference type="GO" id="GO:0008360">
    <property type="term" value="P:regulation of cell shape"/>
    <property type="evidence" value="ECO:0007669"/>
    <property type="project" value="UniProtKB-KW"/>
</dbReference>
<dbReference type="FunFam" id="3.30.1490.20:FF:000007">
    <property type="entry name" value="D-alanine--D-alanine ligase"/>
    <property type="match status" value="1"/>
</dbReference>
<dbReference type="FunFam" id="3.30.470.20:FF:000008">
    <property type="entry name" value="D-alanine--D-alanine ligase"/>
    <property type="match status" value="1"/>
</dbReference>
<dbReference type="Gene3D" id="3.40.50.20">
    <property type="match status" value="1"/>
</dbReference>
<dbReference type="Gene3D" id="3.30.1490.20">
    <property type="entry name" value="ATP-grasp fold, A domain"/>
    <property type="match status" value="1"/>
</dbReference>
<dbReference type="Gene3D" id="3.30.470.20">
    <property type="entry name" value="ATP-grasp fold, B domain"/>
    <property type="match status" value="1"/>
</dbReference>
<dbReference type="HAMAP" id="MF_00047">
    <property type="entry name" value="Dala_Dala_lig"/>
    <property type="match status" value="1"/>
</dbReference>
<dbReference type="InterPro" id="IPR011761">
    <property type="entry name" value="ATP-grasp"/>
</dbReference>
<dbReference type="InterPro" id="IPR013815">
    <property type="entry name" value="ATP_grasp_subdomain_1"/>
</dbReference>
<dbReference type="InterPro" id="IPR000291">
    <property type="entry name" value="D-Ala_lig_Van_CS"/>
</dbReference>
<dbReference type="InterPro" id="IPR005905">
    <property type="entry name" value="D_ala_D_ala"/>
</dbReference>
<dbReference type="InterPro" id="IPR011095">
    <property type="entry name" value="Dala_Dala_lig_C"/>
</dbReference>
<dbReference type="InterPro" id="IPR011127">
    <property type="entry name" value="Dala_Dala_lig_N"/>
</dbReference>
<dbReference type="InterPro" id="IPR016185">
    <property type="entry name" value="PreATP-grasp_dom_sf"/>
</dbReference>
<dbReference type="NCBIfam" id="TIGR01205">
    <property type="entry name" value="D_ala_D_alaTIGR"/>
    <property type="match status" value="1"/>
</dbReference>
<dbReference type="NCBIfam" id="NF002378">
    <property type="entry name" value="PRK01372.1"/>
    <property type="match status" value="1"/>
</dbReference>
<dbReference type="NCBIfam" id="NF002528">
    <property type="entry name" value="PRK01966.1-4"/>
    <property type="match status" value="1"/>
</dbReference>
<dbReference type="PANTHER" id="PTHR23132">
    <property type="entry name" value="D-ALANINE--D-ALANINE LIGASE"/>
    <property type="match status" value="1"/>
</dbReference>
<dbReference type="PANTHER" id="PTHR23132:SF25">
    <property type="entry name" value="D-ALANINE--D-ALANINE LIGASE A"/>
    <property type="match status" value="1"/>
</dbReference>
<dbReference type="Pfam" id="PF07478">
    <property type="entry name" value="Dala_Dala_lig_C"/>
    <property type="match status" value="1"/>
</dbReference>
<dbReference type="Pfam" id="PF01820">
    <property type="entry name" value="Dala_Dala_lig_N"/>
    <property type="match status" value="1"/>
</dbReference>
<dbReference type="PIRSF" id="PIRSF039102">
    <property type="entry name" value="Ddl/VanB"/>
    <property type="match status" value="1"/>
</dbReference>
<dbReference type="SUPFAM" id="SSF56059">
    <property type="entry name" value="Glutathione synthetase ATP-binding domain-like"/>
    <property type="match status" value="1"/>
</dbReference>
<dbReference type="SUPFAM" id="SSF52440">
    <property type="entry name" value="PreATP-grasp domain"/>
    <property type="match status" value="1"/>
</dbReference>
<dbReference type="PROSITE" id="PS50975">
    <property type="entry name" value="ATP_GRASP"/>
    <property type="match status" value="1"/>
</dbReference>
<dbReference type="PROSITE" id="PS00843">
    <property type="entry name" value="DALA_DALA_LIGASE_1"/>
    <property type="match status" value="1"/>
</dbReference>
<dbReference type="PROSITE" id="PS00844">
    <property type="entry name" value="DALA_DALA_LIGASE_2"/>
    <property type="match status" value="1"/>
</dbReference>
<sequence>MPTHRVALIFGGQSTEHEISIISARAIANHIDTEAYELYPIYVGHDGAWFKGETAQKVLDLDMPAMLANTSADTIRERLREISFSDPRNRFLFDFSEEGIDVALPIIHGSTGEDGKIQGLLDMFSVPYTGCGVHASAMTMDKETTKICAEHAGLHIAPYTTIRKLRYQQDPQQVVSVILEEFTLPFFVKPASQGSSIGITKVHRPEELAAALEKAFMVDTKVLIEKTIEGREIEVAVLGNDSPVASVPGEVEPGGDFYDFTDKYINGKASLHIPARLPEEVLQKVSTEALKAYRALECRGMSRVDFFIEHATGKIILNEINTVPGFTGISMYPMMMDASGIDFSQLIDRLLQLALEKTLS</sequence>
<reference key="1">
    <citation type="submission" date="2008-06" db="EMBL/GenBank/DDBJ databases">
        <title>Complete sequence of chromosome of Prosthecochloris aestuarii DSM 271.</title>
        <authorList>
            <consortium name="US DOE Joint Genome Institute"/>
            <person name="Lucas S."/>
            <person name="Copeland A."/>
            <person name="Lapidus A."/>
            <person name="Glavina del Rio T."/>
            <person name="Dalin E."/>
            <person name="Tice H."/>
            <person name="Bruce D."/>
            <person name="Goodwin L."/>
            <person name="Pitluck S."/>
            <person name="Schmutz J."/>
            <person name="Larimer F."/>
            <person name="Land M."/>
            <person name="Hauser L."/>
            <person name="Kyrpides N."/>
            <person name="Anderson I."/>
            <person name="Liu Z."/>
            <person name="Li T."/>
            <person name="Zhao F."/>
            <person name="Overmann J."/>
            <person name="Bryant D.A."/>
            <person name="Richardson P."/>
        </authorList>
    </citation>
    <scope>NUCLEOTIDE SEQUENCE [LARGE SCALE GENOMIC DNA]</scope>
    <source>
        <strain>DSM 271 / SK 413</strain>
    </source>
</reference>
<name>DDL_PROA2</name>
<comment type="function">
    <text evidence="2">Cell wall formation.</text>
</comment>
<comment type="catalytic activity">
    <reaction evidence="2">
        <text>2 D-alanine + ATP = D-alanyl-D-alanine + ADP + phosphate + H(+)</text>
        <dbReference type="Rhea" id="RHEA:11224"/>
        <dbReference type="ChEBI" id="CHEBI:15378"/>
        <dbReference type="ChEBI" id="CHEBI:30616"/>
        <dbReference type="ChEBI" id="CHEBI:43474"/>
        <dbReference type="ChEBI" id="CHEBI:57416"/>
        <dbReference type="ChEBI" id="CHEBI:57822"/>
        <dbReference type="ChEBI" id="CHEBI:456216"/>
        <dbReference type="EC" id="6.3.2.4"/>
    </reaction>
</comment>
<comment type="cofactor">
    <cofactor evidence="1">
        <name>Mg(2+)</name>
        <dbReference type="ChEBI" id="CHEBI:18420"/>
    </cofactor>
    <cofactor evidence="1">
        <name>Mn(2+)</name>
        <dbReference type="ChEBI" id="CHEBI:29035"/>
    </cofactor>
    <text evidence="1">Binds 2 magnesium or manganese ions per subunit.</text>
</comment>
<comment type="pathway">
    <text evidence="2">Cell wall biogenesis; peptidoglycan biosynthesis.</text>
</comment>
<comment type="subcellular location">
    <subcellularLocation>
        <location evidence="2">Cytoplasm</location>
    </subcellularLocation>
</comment>
<comment type="similarity">
    <text evidence="2">Belongs to the D-alanine--D-alanine ligase family.</text>
</comment>
<protein>
    <recommendedName>
        <fullName evidence="2">D-alanine--D-alanine ligase</fullName>
        <ecNumber evidence="2">6.3.2.4</ecNumber>
    </recommendedName>
    <alternativeName>
        <fullName evidence="2">D-Ala-D-Ala ligase</fullName>
    </alternativeName>
    <alternativeName>
        <fullName evidence="2">D-alanylalanine synthetase</fullName>
    </alternativeName>
</protein>